<evidence type="ECO:0000250" key="1"/>
<evidence type="ECO:0000255" key="2">
    <source>
        <dbReference type="PROSITE-ProRule" id="PRU01251"/>
    </source>
</evidence>
<evidence type="ECO:0000305" key="3"/>
<protein>
    <recommendedName>
        <fullName>Chaperone protein ClpB</fullName>
    </recommendedName>
</protein>
<feature type="chain" id="PRO_0000191147" description="Chaperone protein ClpB">
    <location>
        <begin position="1"/>
        <end position="859"/>
    </location>
</feature>
<feature type="domain" description="Clp R" evidence="2">
    <location>
        <begin position="3"/>
        <end position="146"/>
    </location>
</feature>
<feature type="region of interest" description="Repeat 1" evidence="2">
    <location>
        <begin position="6"/>
        <end position="71"/>
    </location>
</feature>
<feature type="region of interest" description="Repeat 2" evidence="2">
    <location>
        <begin position="83"/>
        <end position="146"/>
    </location>
</feature>
<feature type="region of interest" description="NBD1" evidence="1">
    <location>
        <begin position="159"/>
        <end position="340"/>
    </location>
</feature>
<feature type="region of interest" description="Linker" evidence="1">
    <location>
        <begin position="341"/>
        <end position="549"/>
    </location>
</feature>
<feature type="region of interest" description="NBD2" evidence="1">
    <location>
        <begin position="559"/>
        <end position="768"/>
    </location>
</feature>
<feature type="region of interest" description="C-terminal" evidence="1">
    <location>
        <begin position="769"/>
        <end position="859"/>
    </location>
</feature>
<feature type="coiled-coil region" evidence="1">
    <location>
        <begin position="391"/>
        <end position="525"/>
    </location>
</feature>
<feature type="binding site" evidence="1">
    <location>
        <begin position="206"/>
        <end position="213"/>
    </location>
    <ligand>
        <name>ATP</name>
        <dbReference type="ChEBI" id="CHEBI:30616"/>
        <label>1</label>
    </ligand>
</feature>
<feature type="binding site" evidence="1">
    <location>
        <begin position="609"/>
        <end position="616"/>
    </location>
    <ligand>
        <name>ATP</name>
        <dbReference type="ChEBI" id="CHEBI:30616"/>
        <label>2</label>
    </ligand>
</feature>
<dbReference type="EMBL" id="AL157959">
    <property type="protein sequence ID" value="CAM08814.1"/>
    <property type="molecule type" value="Genomic_DNA"/>
</dbReference>
<dbReference type="PIR" id="F81863">
    <property type="entry name" value="F81863"/>
</dbReference>
<dbReference type="RefSeq" id="WP_002247010.1">
    <property type="nucleotide sequence ID" value="NC_003116.1"/>
</dbReference>
<dbReference type="SMR" id="Q9JTP9"/>
<dbReference type="EnsemblBacteria" id="CAM08814">
    <property type="protein sequence ID" value="CAM08814"/>
    <property type="gene ID" value="NMA1683"/>
</dbReference>
<dbReference type="KEGG" id="nma:NMA1683"/>
<dbReference type="HOGENOM" id="CLU_005070_4_0_4"/>
<dbReference type="Proteomes" id="UP000000626">
    <property type="component" value="Chromosome"/>
</dbReference>
<dbReference type="GO" id="GO:0005737">
    <property type="term" value="C:cytoplasm"/>
    <property type="evidence" value="ECO:0007669"/>
    <property type="project" value="UniProtKB-SubCell"/>
</dbReference>
<dbReference type="GO" id="GO:0005524">
    <property type="term" value="F:ATP binding"/>
    <property type="evidence" value="ECO:0007669"/>
    <property type="project" value="UniProtKB-KW"/>
</dbReference>
<dbReference type="GO" id="GO:0016887">
    <property type="term" value="F:ATP hydrolysis activity"/>
    <property type="evidence" value="ECO:0007669"/>
    <property type="project" value="InterPro"/>
</dbReference>
<dbReference type="GO" id="GO:0034605">
    <property type="term" value="P:cellular response to heat"/>
    <property type="evidence" value="ECO:0007669"/>
    <property type="project" value="TreeGrafter"/>
</dbReference>
<dbReference type="GO" id="GO:0042026">
    <property type="term" value="P:protein refolding"/>
    <property type="evidence" value="ECO:0007669"/>
    <property type="project" value="InterPro"/>
</dbReference>
<dbReference type="CDD" id="cd00009">
    <property type="entry name" value="AAA"/>
    <property type="match status" value="1"/>
</dbReference>
<dbReference type="CDD" id="cd19499">
    <property type="entry name" value="RecA-like_ClpB_Hsp104-like"/>
    <property type="match status" value="1"/>
</dbReference>
<dbReference type="FunFam" id="1.10.8.60:FF:000017">
    <property type="entry name" value="ATP-dependent chaperone ClpB"/>
    <property type="match status" value="1"/>
</dbReference>
<dbReference type="FunFam" id="3.40.50.300:FF:000120">
    <property type="entry name" value="ATP-dependent chaperone ClpB"/>
    <property type="match status" value="1"/>
</dbReference>
<dbReference type="FunFam" id="3.40.50.300:FF:000025">
    <property type="entry name" value="ATP-dependent Clp protease subunit"/>
    <property type="match status" value="1"/>
</dbReference>
<dbReference type="FunFam" id="3.40.50.300:FF:000010">
    <property type="entry name" value="Chaperone clpB 1, putative"/>
    <property type="match status" value="1"/>
</dbReference>
<dbReference type="Gene3D" id="1.10.8.60">
    <property type="match status" value="1"/>
</dbReference>
<dbReference type="Gene3D" id="1.10.1780.10">
    <property type="entry name" value="Clp, N-terminal domain"/>
    <property type="match status" value="1"/>
</dbReference>
<dbReference type="Gene3D" id="3.40.50.300">
    <property type="entry name" value="P-loop containing nucleotide triphosphate hydrolases"/>
    <property type="match status" value="3"/>
</dbReference>
<dbReference type="InterPro" id="IPR003593">
    <property type="entry name" value="AAA+_ATPase"/>
</dbReference>
<dbReference type="InterPro" id="IPR003959">
    <property type="entry name" value="ATPase_AAA_core"/>
</dbReference>
<dbReference type="InterPro" id="IPR017730">
    <property type="entry name" value="Chaperonin_ClpB"/>
</dbReference>
<dbReference type="InterPro" id="IPR019489">
    <property type="entry name" value="Clp_ATPase_C"/>
</dbReference>
<dbReference type="InterPro" id="IPR036628">
    <property type="entry name" value="Clp_N_dom_sf"/>
</dbReference>
<dbReference type="InterPro" id="IPR004176">
    <property type="entry name" value="Clp_R_dom"/>
</dbReference>
<dbReference type="InterPro" id="IPR001270">
    <property type="entry name" value="ClpA/B"/>
</dbReference>
<dbReference type="InterPro" id="IPR018368">
    <property type="entry name" value="ClpA/B_CS1"/>
</dbReference>
<dbReference type="InterPro" id="IPR028299">
    <property type="entry name" value="ClpA/B_CS2"/>
</dbReference>
<dbReference type="InterPro" id="IPR041546">
    <property type="entry name" value="ClpA/ClpB_AAA_lid"/>
</dbReference>
<dbReference type="InterPro" id="IPR050130">
    <property type="entry name" value="ClpA_ClpB"/>
</dbReference>
<dbReference type="InterPro" id="IPR027417">
    <property type="entry name" value="P-loop_NTPase"/>
</dbReference>
<dbReference type="NCBIfam" id="TIGR03346">
    <property type="entry name" value="chaperone_ClpB"/>
    <property type="match status" value="1"/>
</dbReference>
<dbReference type="PANTHER" id="PTHR11638">
    <property type="entry name" value="ATP-DEPENDENT CLP PROTEASE"/>
    <property type="match status" value="1"/>
</dbReference>
<dbReference type="PANTHER" id="PTHR11638:SF18">
    <property type="entry name" value="HEAT SHOCK PROTEIN 104"/>
    <property type="match status" value="1"/>
</dbReference>
<dbReference type="Pfam" id="PF00004">
    <property type="entry name" value="AAA"/>
    <property type="match status" value="1"/>
</dbReference>
<dbReference type="Pfam" id="PF07724">
    <property type="entry name" value="AAA_2"/>
    <property type="match status" value="1"/>
</dbReference>
<dbReference type="Pfam" id="PF17871">
    <property type="entry name" value="AAA_lid_9"/>
    <property type="match status" value="1"/>
</dbReference>
<dbReference type="Pfam" id="PF02861">
    <property type="entry name" value="Clp_N"/>
    <property type="match status" value="2"/>
</dbReference>
<dbReference type="Pfam" id="PF10431">
    <property type="entry name" value="ClpB_D2-small"/>
    <property type="match status" value="1"/>
</dbReference>
<dbReference type="PRINTS" id="PR00300">
    <property type="entry name" value="CLPPROTEASEA"/>
</dbReference>
<dbReference type="SMART" id="SM00382">
    <property type="entry name" value="AAA"/>
    <property type="match status" value="2"/>
</dbReference>
<dbReference type="SMART" id="SM01086">
    <property type="entry name" value="ClpB_D2-small"/>
    <property type="match status" value="1"/>
</dbReference>
<dbReference type="SUPFAM" id="SSF81923">
    <property type="entry name" value="Double Clp-N motif"/>
    <property type="match status" value="1"/>
</dbReference>
<dbReference type="SUPFAM" id="SSF52540">
    <property type="entry name" value="P-loop containing nucleoside triphosphate hydrolases"/>
    <property type="match status" value="2"/>
</dbReference>
<dbReference type="PROSITE" id="PS51903">
    <property type="entry name" value="CLP_R"/>
    <property type="match status" value="1"/>
</dbReference>
<dbReference type="PROSITE" id="PS00870">
    <property type="entry name" value="CLPAB_1"/>
    <property type="match status" value="1"/>
</dbReference>
<dbReference type="PROSITE" id="PS00871">
    <property type="entry name" value="CLPAB_2"/>
    <property type="match status" value="1"/>
</dbReference>
<organism>
    <name type="scientific">Neisseria meningitidis serogroup A / serotype 4A (strain DSM 15465 / Z2491)</name>
    <dbReference type="NCBI Taxonomy" id="122587"/>
    <lineage>
        <taxon>Bacteria</taxon>
        <taxon>Pseudomonadati</taxon>
        <taxon>Pseudomonadota</taxon>
        <taxon>Betaproteobacteria</taxon>
        <taxon>Neisseriales</taxon>
        <taxon>Neisseriaceae</taxon>
        <taxon>Neisseria</taxon>
    </lineage>
</organism>
<keyword id="KW-0067">ATP-binding</keyword>
<keyword id="KW-0143">Chaperone</keyword>
<keyword id="KW-0175">Coiled coil</keyword>
<keyword id="KW-0963">Cytoplasm</keyword>
<keyword id="KW-0547">Nucleotide-binding</keyword>
<keyword id="KW-0677">Repeat</keyword>
<keyword id="KW-0346">Stress response</keyword>
<sequence>MRYDKLTAKFQQALAEAQSLALAADSSYLEAGFVLKALLDDQNSGAAALLAHAGVNVPQVKQRLQQHLNSLPKVSGQGGDILPSRELQAVLNLMDKAATKRGDAYIASELFLLALVQQNDAAGKILKEAGATEQNINAAIDAVRGGQNVNDANAEDQRDALKKYTLDLTQRARDGKLDPVIGRDDEIRRAIQVLQRRTKNNPVLIGEPGVGKTAIVEGLAQRIVNGEVPESLRNKRLLVLDLAALIAGAKYRGEFEERLKGVLNDLAKDDGNTLIFIDEIHTLVGAGKTDGAMDAGNMLKPALARGELHCIGATTLDEYRQYIEKDAALERRFQKVLVGEPSVEDTIAILRGLQERYEIHHGIDITDPAIVAAAELSDRYITDRFLPDKAIDLIDEAASRVKMEKETKPEAMDKIDRRLIQLRMEKAHVEKEKDDASKKRLELIDEEINGLQKEYADLDEIWKAEKAISDGAANIKKQIDEVKIKIEQAKRQGDLALASKLMYEDLEHLEKQRAAAERADTDSTKPANKLLRNNVGAEEIAEVVSRMTGIPVSKMMEGERDKLLKMEEVLHRRVVGQDEAVRAVSDAIRRSRSGLADPNKPYGSFLFLGPTGVGKTELCKALAGFLFDSEDHLIRIDMSEYMEKHAVARLIGAPPGYVGYEEGGYLTEQVRRKPYSVILLDEVEKAHPDVFNILLQVLDDGRLTDGQGRTVDFKNTVIVMTSNIGSQHIQQMGIQDYEAVKEVVMEDVKEHFRPEMINRIDEVVVFHGLDQANIRSIAKIQLKGLEKRLEKQNLRLAVSDAALDIIAKAGFDPIYGARPLKRAIQSEIENPLAKALLAGNYAPESEIRVEADGDRLKFA</sequence>
<accession>Q9JTP9</accession>
<accession>A1ISQ2</accession>
<reference key="1">
    <citation type="journal article" date="2000" name="Nature">
        <title>Complete DNA sequence of a serogroup A strain of Neisseria meningitidis Z2491.</title>
        <authorList>
            <person name="Parkhill J."/>
            <person name="Achtman M."/>
            <person name="James K.D."/>
            <person name="Bentley S.D."/>
            <person name="Churcher C.M."/>
            <person name="Klee S.R."/>
            <person name="Morelli G."/>
            <person name="Basham D."/>
            <person name="Brown D."/>
            <person name="Chillingworth T."/>
            <person name="Davies R.M."/>
            <person name="Davis P."/>
            <person name="Devlin K."/>
            <person name="Feltwell T."/>
            <person name="Hamlin N."/>
            <person name="Holroyd S."/>
            <person name="Jagels K."/>
            <person name="Leather S."/>
            <person name="Moule S."/>
            <person name="Mungall K.L."/>
            <person name="Quail M.A."/>
            <person name="Rajandream M.A."/>
            <person name="Rutherford K.M."/>
            <person name="Simmonds M."/>
            <person name="Skelton J."/>
            <person name="Whitehead S."/>
            <person name="Spratt B.G."/>
            <person name="Barrell B.G."/>
        </authorList>
    </citation>
    <scope>NUCLEOTIDE SEQUENCE [LARGE SCALE GENOMIC DNA]</scope>
    <source>
        <strain>DSM 15465 / Z2491</strain>
    </source>
</reference>
<name>CLPB_NEIMA</name>
<proteinExistence type="inferred from homology"/>
<gene>
    <name type="primary">clpB</name>
    <name type="ordered locus">NMA1683</name>
</gene>
<comment type="function">
    <text evidence="1">Part of a stress-induced multi-chaperone system, it is involved in the recovery of the cell from heat-induced damage, in cooperation with DnaK, DnaJ and GrpE. Acts before DnaK, in the processing of protein aggregates. Protein binding stimulates the ATPase activity; ATP hydrolysis unfolds the denatured protein aggregates, which probably helps expose new hydrophobic binding sites on the surface of ClpB-bound aggregates, contributing to the solubilization and refolding of denatured protein aggregates by DnaK (By similarity).</text>
</comment>
<comment type="subunit">
    <text evidence="1">Homohexamer. The oligomerization is ATP-dependent (By similarity).</text>
</comment>
<comment type="subcellular location">
    <subcellularLocation>
        <location evidence="3">Cytoplasm</location>
    </subcellularLocation>
</comment>
<comment type="domain">
    <text evidence="1">The Clp repeat (R) domain probably functions as a substrate-discriminating domain, recruiting aggregated proteins to the ClpB hexamer and/or stabilizing bound proteins. The NBD2 domain is responsible for oligomerization, whereas the NBD1 domain stabilizes the hexamer probably in an ATP-dependent manner. The movement of the coiled-coil domain is essential for ClpB ability to rescue proteins from an aggregated state, probably by pulling apart large aggregated proteins, which are bound between the coiled-coils motifs of adjacent ClpB subunits in the functional hexamer (By similarity).</text>
</comment>
<comment type="similarity">
    <text evidence="3">Belongs to the ClpA/ClpB family.</text>
</comment>